<evidence type="ECO:0000255" key="1">
    <source>
        <dbReference type="HAMAP-Rule" id="MF_00321"/>
    </source>
</evidence>
<proteinExistence type="inferred from homology"/>
<reference key="1">
    <citation type="journal article" date="2006" name="Proc. Natl. Acad. Sci. U.S.A.">
        <title>Genome reduction in Leptospira borgpetersenii reflects limited transmission potential.</title>
        <authorList>
            <person name="Bulach D.M."/>
            <person name="Zuerner R.L."/>
            <person name="Wilson P."/>
            <person name="Seemann T."/>
            <person name="McGrath A."/>
            <person name="Cullen P.A."/>
            <person name="Davis J."/>
            <person name="Johnson M."/>
            <person name="Kuczek E."/>
            <person name="Alt D.P."/>
            <person name="Peterson-Burch B."/>
            <person name="Coppel R.L."/>
            <person name="Rood J.I."/>
            <person name="Davies J.K."/>
            <person name="Adler B."/>
        </authorList>
    </citation>
    <scope>NUCLEOTIDE SEQUENCE [LARGE SCALE GENOMIC DNA]</scope>
    <source>
        <strain>L550</strain>
    </source>
</reference>
<accession>Q04XC3</accession>
<protein>
    <recommendedName>
        <fullName evidence="1">Probable GTP-binding protein EngB</fullName>
    </recommendedName>
</protein>
<organism>
    <name type="scientific">Leptospira borgpetersenii serovar Hardjo-bovis (strain L550)</name>
    <dbReference type="NCBI Taxonomy" id="355276"/>
    <lineage>
        <taxon>Bacteria</taxon>
        <taxon>Pseudomonadati</taxon>
        <taxon>Spirochaetota</taxon>
        <taxon>Spirochaetia</taxon>
        <taxon>Leptospirales</taxon>
        <taxon>Leptospiraceae</taxon>
        <taxon>Leptospira</taxon>
    </lineage>
</organism>
<sequence>MNEDPQKKDEPFFKDVEFKASYGEANQIPSQGIPQIAFAGRSNAGKSSLLNAILERKSLAKVSSTPGKTKLLNFFFVNRSIYLVDLPGFGYSANSHKDHEAMMDLLMDYLNLAKDLKCLFLVCDSQRELPEEELELIGTCFERNIKPVLVRTKIDKLNQSDLSKLRKKMKNIHELYPMLETVLVSNKSGKGLPELRKIVDSLITTVGTLVEGNTKKIEGIS</sequence>
<feature type="chain" id="PRO_1000005829" description="Probable GTP-binding protein EngB">
    <location>
        <begin position="1"/>
        <end position="221"/>
    </location>
</feature>
<feature type="domain" description="EngB-type G" evidence="1">
    <location>
        <begin position="32"/>
        <end position="205"/>
    </location>
</feature>
<feature type="binding site" evidence="1">
    <location>
        <begin position="40"/>
        <end position="47"/>
    </location>
    <ligand>
        <name>GTP</name>
        <dbReference type="ChEBI" id="CHEBI:37565"/>
    </ligand>
</feature>
<feature type="binding site" evidence="1">
    <location>
        <position position="47"/>
    </location>
    <ligand>
        <name>Mg(2+)</name>
        <dbReference type="ChEBI" id="CHEBI:18420"/>
    </ligand>
</feature>
<feature type="binding site" evidence="1">
    <location>
        <begin position="67"/>
        <end position="71"/>
    </location>
    <ligand>
        <name>GTP</name>
        <dbReference type="ChEBI" id="CHEBI:37565"/>
    </ligand>
</feature>
<feature type="binding site" evidence="1">
    <location>
        <position position="69"/>
    </location>
    <ligand>
        <name>Mg(2+)</name>
        <dbReference type="ChEBI" id="CHEBI:18420"/>
    </ligand>
</feature>
<feature type="binding site" evidence="1">
    <location>
        <begin position="85"/>
        <end position="88"/>
    </location>
    <ligand>
        <name>GTP</name>
        <dbReference type="ChEBI" id="CHEBI:37565"/>
    </ligand>
</feature>
<feature type="binding site" evidence="1">
    <location>
        <begin position="152"/>
        <end position="155"/>
    </location>
    <ligand>
        <name>GTP</name>
        <dbReference type="ChEBI" id="CHEBI:37565"/>
    </ligand>
</feature>
<feature type="binding site" evidence="1">
    <location>
        <begin position="184"/>
        <end position="186"/>
    </location>
    <ligand>
        <name>GTP</name>
        <dbReference type="ChEBI" id="CHEBI:37565"/>
    </ligand>
</feature>
<gene>
    <name evidence="1" type="primary">engB</name>
    <name type="ordered locus">LBL_2956</name>
</gene>
<name>ENGB_LEPBL</name>
<comment type="function">
    <text evidence="1">Necessary for normal cell division and for the maintenance of normal septation.</text>
</comment>
<comment type="cofactor">
    <cofactor evidence="1">
        <name>Mg(2+)</name>
        <dbReference type="ChEBI" id="CHEBI:18420"/>
    </cofactor>
</comment>
<comment type="similarity">
    <text evidence="1">Belongs to the TRAFAC class TrmE-Era-EngA-EngB-Septin-like GTPase superfamily. EngB GTPase family.</text>
</comment>
<keyword id="KW-0131">Cell cycle</keyword>
<keyword id="KW-0132">Cell division</keyword>
<keyword id="KW-0342">GTP-binding</keyword>
<keyword id="KW-0460">Magnesium</keyword>
<keyword id="KW-0479">Metal-binding</keyword>
<keyword id="KW-0547">Nucleotide-binding</keyword>
<keyword id="KW-0717">Septation</keyword>
<dbReference type="EMBL" id="CP000348">
    <property type="protein sequence ID" value="ABJ80272.1"/>
    <property type="molecule type" value="Genomic_DNA"/>
</dbReference>
<dbReference type="SMR" id="Q04XC3"/>
<dbReference type="KEGG" id="lbl:LBL_2956"/>
<dbReference type="HOGENOM" id="CLU_033732_3_0_12"/>
<dbReference type="GO" id="GO:0005829">
    <property type="term" value="C:cytosol"/>
    <property type="evidence" value="ECO:0007669"/>
    <property type="project" value="TreeGrafter"/>
</dbReference>
<dbReference type="GO" id="GO:0005525">
    <property type="term" value="F:GTP binding"/>
    <property type="evidence" value="ECO:0007669"/>
    <property type="project" value="UniProtKB-UniRule"/>
</dbReference>
<dbReference type="GO" id="GO:0046872">
    <property type="term" value="F:metal ion binding"/>
    <property type="evidence" value="ECO:0007669"/>
    <property type="project" value="UniProtKB-KW"/>
</dbReference>
<dbReference type="GO" id="GO:0000917">
    <property type="term" value="P:division septum assembly"/>
    <property type="evidence" value="ECO:0007669"/>
    <property type="project" value="UniProtKB-KW"/>
</dbReference>
<dbReference type="CDD" id="cd01876">
    <property type="entry name" value="YihA_EngB"/>
    <property type="match status" value="1"/>
</dbReference>
<dbReference type="FunFam" id="3.40.50.300:FF:001611">
    <property type="entry name" value="Probable GTP-binding protein EngB"/>
    <property type="match status" value="1"/>
</dbReference>
<dbReference type="Gene3D" id="3.40.50.300">
    <property type="entry name" value="P-loop containing nucleotide triphosphate hydrolases"/>
    <property type="match status" value="1"/>
</dbReference>
<dbReference type="HAMAP" id="MF_00321">
    <property type="entry name" value="GTPase_EngB"/>
    <property type="match status" value="1"/>
</dbReference>
<dbReference type="InterPro" id="IPR030393">
    <property type="entry name" value="G_ENGB_dom"/>
</dbReference>
<dbReference type="InterPro" id="IPR006073">
    <property type="entry name" value="GTP-bd"/>
</dbReference>
<dbReference type="InterPro" id="IPR019987">
    <property type="entry name" value="GTP-bd_ribosome_bio_YsxC"/>
</dbReference>
<dbReference type="InterPro" id="IPR027417">
    <property type="entry name" value="P-loop_NTPase"/>
</dbReference>
<dbReference type="NCBIfam" id="TIGR03598">
    <property type="entry name" value="GTPase_YsxC"/>
    <property type="match status" value="1"/>
</dbReference>
<dbReference type="PANTHER" id="PTHR11649:SF13">
    <property type="entry name" value="ENGB-TYPE G DOMAIN-CONTAINING PROTEIN"/>
    <property type="match status" value="1"/>
</dbReference>
<dbReference type="PANTHER" id="PTHR11649">
    <property type="entry name" value="MSS1/TRME-RELATED GTP-BINDING PROTEIN"/>
    <property type="match status" value="1"/>
</dbReference>
<dbReference type="Pfam" id="PF01926">
    <property type="entry name" value="MMR_HSR1"/>
    <property type="match status" value="1"/>
</dbReference>
<dbReference type="SUPFAM" id="SSF52540">
    <property type="entry name" value="P-loop containing nucleoside triphosphate hydrolases"/>
    <property type="match status" value="1"/>
</dbReference>
<dbReference type="PROSITE" id="PS51706">
    <property type="entry name" value="G_ENGB"/>
    <property type="match status" value="1"/>
</dbReference>